<feature type="chain" id="PRO_0000288408" description="Proline--tRNA ligase">
    <location>
        <begin position="1"/>
        <end position="491"/>
    </location>
</feature>
<name>SYP_CYTH3</name>
<gene>
    <name evidence="1" type="primary">proS</name>
    <name type="ordered locus">CHU_3228</name>
</gene>
<protein>
    <recommendedName>
        <fullName evidence="1">Proline--tRNA ligase</fullName>
        <ecNumber evidence="1">6.1.1.15</ecNumber>
    </recommendedName>
    <alternativeName>
        <fullName evidence="1">Prolyl-tRNA synthetase</fullName>
        <shortName evidence="1">ProRS</shortName>
    </alternativeName>
</protein>
<proteinExistence type="inferred from homology"/>
<dbReference type="EC" id="6.1.1.15" evidence="1"/>
<dbReference type="EMBL" id="CP000383">
    <property type="protein sequence ID" value="ABG60468.1"/>
    <property type="molecule type" value="Genomic_DNA"/>
</dbReference>
<dbReference type="RefSeq" id="WP_011586578.1">
    <property type="nucleotide sequence ID" value="NC_008255.1"/>
</dbReference>
<dbReference type="SMR" id="Q11Q45"/>
<dbReference type="STRING" id="269798.CHU_3228"/>
<dbReference type="KEGG" id="chu:CHU_3228"/>
<dbReference type="eggNOG" id="COG0442">
    <property type="taxonomic scope" value="Bacteria"/>
</dbReference>
<dbReference type="HOGENOM" id="CLU_001882_4_2_10"/>
<dbReference type="OrthoDB" id="9809052at2"/>
<dbReference type="SABIO-RK" id="Q11Q45"/>
<dbReference type="Proteomes" id="UP000001822">
    <property type="component" value="Chromosome"/>
</dbReference>
<dbReference type="GO" id="GO:0017101">
    <property type="term" value="C:aminoacyl-tRNA synthetase multienzyme complex"/>
    <property type="evidence" value="ECO:0007669"/>
    <property type="project" value="TreeGrafter"/>
</dbReference>
<dbReference type="GO" id="GO:0005737">
    <property type="term" value="C:cytoplasm"/>
    <property type="evidence" value="ECO:0007669"/>
    <property type="project" value="UniProtKB-SubCell"/>
</dbReference>
<dbReference type="GO" id="GO:0005524">
    <property type="term" value="F:ATP binding"/>
    <property type="evidence" value="ECO:0007669"/>
    <property type="project" value="UniProtKB-UniRule"/>
</dbReference>
<dbReference type="GO" id="GO:0004827">
    <property type="term" value="F:proline-tRNA ligase activity"/>
    <property type="evidence" value="ECO:0007669"/>
    <property type="project" value="UniProtKB-UniRule"/>
</dbReference>
<dbReference type="GO" id="GO:0006433">
    <property type="term" value="P:prolyl-tRNA aminoacylation"/>
    <property type="evidence" value="ECO:0007669"/>
    <property type="project" value="UniProtKB-UniRule"/>
</dbReference>
<dbReference type="CDD" id="cd00862">
    <property type="entry name" value="ProRS_anticodon_zinc"/>
    <property type="match status" value="1"/>
</dbReference>
<dbReference type="CDD" id="cd00778">
    <property type="entry name" value="ProRS_core_arch_euk"/>
    <property type="match status" value="1"/>
</dbReference>
<dbReference type="FunFam" id="3.30.930.10:FF:000023">
    <property type="entry name" value="Proline--tRNA ligase"/>
    <property type="match status" value="1"/>
</dbReference>
<dbReference type="Gene3D" id="3.40.50.800">
    <property type="entry name" value="Anticodon-binding domain"/>
    <property type="match status" value="1"/>
</dbReference>
<dbReference type="Gene3D" id="3.30.930.10">
    <property type="entry name" value="Bira Bifunctional Protein, Domain 2"/>
    <property type="match status" value="1"/>
</dbReference>
<dbReference type="Gene3D" id="3.30.110.30">
    <property type="entry name" value="C-terminal domain of ProRS"/>
    <property type="match status" value="1"/>
</dbReference>
<dbReference type="HAMAP" id="MF_01571">
    <property type="entry name" value="Pro_tRNA_synth_type3"/>
    <property type="match status" value="1"/>
</dbReference>
<dbReference type="InterPro" id="IPR002314">
    <property type="entry name" value="aa-tRNA-synt_IIb"/>
</dbReference>
<dbReference type="InterPro" id="IPR006195">
    <property type="entry name" value="aa-tRNA-synth_II"/>
</dbReference>
<dbReference type="InterPro" id="IPR045864">
    <property type="entry name" value="aa-tRNA-synth_II/BPL/LPL"/>
</dbReference>
<dbReference type="InterPro" id="IPR004154">
    <property type="entry name" value="Anticodon-bd"/>
</dbReference>
<dbReference type="InterPro" id="IPR036621">
    <property type="entry name" value="Anticodon-bd_dom_sf"/>
</dbReference>
<dbReference type="InterPro" id="IPR004499">
    <property type="entry name" value="Pro-tRNA-ligase_IIa_arc-type"/>
</dbReference>
<dbReference type="InterPro" id="IPR016061">
    <property type="entry name" value="Pro-tRNA_ligase_II_C"/>
</dbReference>
<dbReference type="InterPro" id="IPR017449">
    <property type="entry name" value="Pro-tRNA_synth_II"/>
</dbReference>
<dbReference type="InterPro" id="IPR033721">
    <property type="entry name" value="ProRS_core_arch_euk"/>
</dbReference>
<dbReference type="NCBIfam" id="TIGR00408">
    <property type="entry name" value="proS_fam_I"/>
    <property type="match status" value="1"/>
</dbReference>
<dbReference type="PANTHER" id="PTHR43382:SF2">
    <property type="entry name" value="BIFUNCTIONAL GLUTAMATE_PROLINE--TRNA LIGASE"/>
    <property type="match status" value="1"/>
</dbReference>
<dbReference type="PANTHER" id="PTHR43382">
    <property type="entry name" value="PROLYL-TRNA SYNTHETASE"/>
    <property type="match status" value="1"/>
</dbReference>
<dbReference type="Pfam" id="PF03129">
    <property type="entry name" value="HGTP_anticodon"/>
    <property type="match status" value="1"/>
</dbReference>
<dbReference type="Pfam" id="PF09180">
    <property type="entry name" value="ProRS-C_1"/>
    <property type="match status" value="1"/>
</dbReference>
<dbReference type="Pfam" id="PF00587">
    <property type="entry name" value="tRNA-synt_2b"/>
    <property type="match status" value="1"/>
</dbReference>
<dbReference type="SMART" id="SM00946">
    <property type="entry name" value="ProRS-C_1"/>
    <property type="match status" value="1"/>
</dbReference>
<dbReference type="SUPFAM" id="SSF64586">
    <property type="entry name" value="C-terminal domain of ProRS"/>
    <property type="match status" value="1"/>
</dbReference>
<dbReference type="SUPFAM" id="SSF52954">
    <property type="entry name" value="Class II aaRS ABD-related"/>
    <property type="match status" value="1"/>
</dbReference>
<dbReference type="SUPFAM" id="SSF55681">
    <property type="entry name" value="Class II aaRS and biotin synthetases"/>
    <property type="match status" value="1"/>
</dbReference>
<dbReference type="PROSITE" id="PS50862">
    <property type="entry name" value="AA_TRNA_LIGASE_II"/>
    <property type="match status" value="1"/>
</dbReference>
<comment type="function">
    <text evidence="1">Catalyzes the attachment of proline to tRNA(Pro) in a two-step reaction: proline is first activated by ATP to form Pro-AMP and then transferred to the acceptor end of tRNA(Pro).</text>
</comment>
<comment type="catalytic activity">
    <reaction evidence="1">
        <text>tRNA(Pro) + L-proline + ATP = L-prolyl-tRNA(Pro) + AMP + diphosphate</text>
        <dbReference type="Rhea" id="RHEA:14305"/>
        <dbReference type="Rhea" id="RHEA-COMP:9700"/>
        <dbReference type="Rhea" id="RHEA-COMP:9702"/>
        <dbReference type="ChEBI" id="CHEBI:30616"/>
        <dbReference type="ChEBI" id="CHEBI:33019"/>
        <dbReference type="ChEBI" id="CHEBI:60039"/>
        <dbReference type="ChEBI" id="CHEBI:78442"/>
        <dbReference type="ChEBI" id="CHEBI:78532"/>
        <dbReference type="ChEBI" id="CHEBI:456215"/>
        <dbReference type="EC" id="6.1.1.15"/>
    </reaction>
</comment>
<comment type="subunit">
    <text evidence="1">Homodimer.</text>
</comment>
<comment type="subcellular location">
    <subcellularLocation>
        <location evidence="1">Cytoplasm</location>
    </subcellularLocation>
</comment>
<comment type="domain">
    <text evidence="1">Consists of three domains: the N-terminal catalytic domain, the anticodon-binding domain and the C-terminal extension.</text>
</comment>
<comment type="similarity">
    <text evidence="1">Belongs to the class-II aminoacyl-tRNA synthetase family. ProS type 3 subfamily.</text>
</comment>
<organism>
    <name type="scientific">Cytophaga hutchinsonii (strain ATCC 33406 / DSM 1761 / CIP 103989 / NBRC 15051 / NCIMB 9469 / D465)</name>
    <dbReference type="NCBI Taxonomy" id="269798"/>
    <lineage>
        <taxon>Bacteria</taxon>
        <taxon>Pseudomonadati</taxon>
        <taxon>Bacteroidota</taxon>
        <taxon>Cytophagia</taxon>
        <taxon>Cytophagales</taxon>
        <taxon>Cytophagaceae</taxon>
        <taxon>Cytophaga</taxon>
    </lineage>
</organism>
<reference key="1">
    <citation type="journal article" date="2007" name="Appl. Environ. Microbiol.">
        <title>Genome sequence of the cellulolytic gliding bacterium Cytophaga hutchinsonii.</title>
        <authorList>
            <person name="Xie G."/>
            <person name="Bruce D.C."/>
            <person name="Challacombe J.F."/>
            <person name="Chertkov O."/>
            <person name="Detter J.C."/>
            <person name="Gilna P."/>
            <person name="Han C.S."/>
            <person name="Lucas S."/>
            <person name="Misra M."/>
            <person name="Myers G.L."/>
            <person name="Richardson P."/>
            <person name="Tapia R."/>
            <person name="Thayer N."/>
            <person name="Thompson L.S."/>
            <person name="Brettin T.S."/>
            <person name="Henrissat B."/>
            <person name="Wilson D.B."/>
            <person name="McBride M.J."/>
        </authorList>
    </citation>
    <scope>NUCLEOTIDE SEQUENCE [LARGE SCALE GENOMIC DNA]</scope>
    <source>
        <strain>ATCC 33406 / DSM 1761 / JCM 20678 / CIP 103989 / IAM 12607 / NBRC 15051 / NCIMB 9469 / D465</strain>
    </source>
</reference>
<keyword id="KW-0030">Aminoacyl-tRNA synthetase</keyword>
<keyword id="KW-0067">ATP-binding</keyword>
<keyword id="KW-0963">Cytoplasm</keyword>
<keyword id="KW-0436">Ligase</keyword>
<keyword id="KW-0547">Nucleotide-binding</keyword>
<keyword id="KW-0648">Protein biosynthesis</keyword>
<keyword id="KW-1185">Reference proteome</keyword>
<sequence length="491" mass="55613">MSKVLPKRSDDYSLWYNELVKRADLAENAPVRGCMIIKPYGYSIWEKMQAVLDKMFKETGHSNAYFPLFIPKSYLSKEASHIDGFAKECAVVTHYRLKNDENGKGIIVDPEAKLDEELIVRPTSETVIWNTYKTWIQSHRDLPLLINQWANVVRWEMRTRLFLRTTEFLWQEGHTAHATKQEAIVETEQMMNVYATFAQNFMALPVHRGIKSANERFAGAEETYCIEALMQDGKALQAGTSHFLGQNFAKAFDVKFASKEGSLEYVWGTSWGVSTRLMGALIMAHSDDEGLVLPPLLAPIQVVIVPIFKTAEQLDLIEATLKPILAALKAKDISVKFDHSDKYSPGFKFAEYELKGVPLRVAIGARDIENGTVELARRDTKEKTTVPQEGLADTIEKLLQEIQENIYKKAFAYREANTFVADDYTTFKTMLDETPGFILAHWDGTPETEEKIKEETKATIRCIPLDVTSEPGICMVTGKPSAQRVLFARAY</sequence>
<evidence type="ECO:0000255" key="1">
    <source>
        <dbReference type="HAMAP-Rule" id="MF_01571"/>
    </source>
</evidence>
<accession>Q11Q45</accession>